<dbReference type="EMBL" id="X15097">
    <property type="protein sequence ID" value="CAA33200.1"/>
    <property type="molecule type" value="mRNA"/>
</dbReference>
<dbReference type="EMBL" id="BC058151">
    <property type="protein sequence ID" value="AAH58151.1"/>
    <property type="molecule type" value="mRNA"/>
</dbReference>
<dbReference type="PIR" id="S08022">
    <property type="entry name" value="R5RT12"/>
</dbReference>
<dbReference type="RefSeq" id="NP_001007605.1">
    <property type="nucleotide sequence ID" value="NM_001007604.2"/>
</dbReference>
<dbReference type="RefSeq" id="XP_003752993.1">
    <property type="nucleotide sequence ID" value="XM_003752945.2"/>
</dbReference>
<dbReference type="RefSeq" id="XP_017456174.1">
    <property type="nucleotide sequence ID" value="XM_017600685.1"/>
</dbReference>
<dbReference type="RefSeq" id="XP_017456175.1">
    <property type="nucleotide sequence ID" value="XM_017600686.1"/>
</dbReference>
<dbReference type="BMRB" id="P19944"/>
<dbReference type="SMR" id="P19944"/>
<dbReference type="BioGRID" id="1199657">
    <property type="interactions" value="1"/>
</dbReference>
<dbReference type="BioGRID" id="250822">
    <property type="interactions" value="4"/>
</dbReference>
<dbReference type="FunCoup" id="P19944">
    <property type="interactions" value="1860"/>
</dbReference>
<dbReference type="IntAct" id="P19944">
    <property type="interactions" value="2"/>
</dbReference>
<dbReference type="STRING" id="10116.ENSRNOP00000018820"/>
<dbReference type="iPTMnet" id="P19944"/>
<dbReference type="PhosphoSitePlus" id="P19944"/>
<dbReference type="jPOST" id="P19944"/>
<dbReference type="PaxDb" id="10116-ENSRNOP00000015893"/>
<dbReference type="Ensembl" id="ENSRNOT00000018820.6">
    <property type="protein sequence ID" value="ENSRNOP00000018820.2"/>
    <property type="gene ID" value="ENSRNOG00000013874.6"/>
</dbReference>
<dbReference type="Ensembl" id="ENSRNOT00000107660.1">
    <property type="protein sequence ID" value="ENSRNOP00000087435.1"/>
    <property type="gene ID" value="ENSRNOG00000063015.1"/>
</dbReference>
<dbReference type="Ensembl" id="ENSRNOT00000111700.1">
    <property type="protein sequence ID" value="ENSRNOP00000092643.1"/>
    <property type="gene ID" value="ENSRNOG00000063015.1"/>
</dbReference>
<dbReference type="GeneID" id="140661"/>
<dbReference type="KEGG" id="rno:140661"/>
<dbReference type="UCSC" id="RGD:621774">
    <property type="organism name" value="rat"/>
</dbReference>
<dbReference type="AGR" id="RGD:2321935"/>
<dbReference type="AGR" id="RGD:621774"/>
<dbReference type="CTD" id="6176"/>
<dbReference type="RGD" id="621774">
    <property type="gene designation" value="Rplp1"/>
</dbReference>
<dbReference type="eggNOG" id="KOG1762">
    <property type="taxonomic scope" value="Eukaryota"/>
</dbReference>
<dbReference type="GeneTree" id="ENSGT00550000074698"/>
<dbReference type="HOGENOM" id="CLU_114656_1_2_1"/>
<dbReference type="InParanoid" id="P19944"/>
<dbReference type="OMA" id="REELMCV"/>
<dbReference type="OrthoDB" id="9631264at2759"/>
<dbReference type="PhylomeDB" id="P19944"/>
<dbReference type="TreeFam" id="TF312932"/>
<dbReference type="Reactome" id="R-RNO-156827">
    <property type="pathway name" value="L13a-mediated translational silencing of Ceruloplasmin expression"/>
</dbReference>
<dbReference type="Reactome" id="R-RNO-1799339">
    <property type="pathway name" value="SRP-dependent cotranslational protein targeting to membrane"/>
</dbReference>
<dbReference type="Reactome" id="R-RNO-6791226">
    <property type="pathway name" value="Major pathway of rRNA processing in the nucleolus and cytosol"/>
</dbReference>
<dbReference type="Reactome" id="R-RNO-72689">
    <property type="pathway name" value="Formation of a pool of free 40S subunits"/>
</dbReference>
<dbReference type="Reactome" id="R-RNO-72706">
    <property type="pathway name" value="GTP hydrolysis and joining of the 60S ribosomal subunit"/>
</dbReference>
<dbReference type="Reactome" id="R-RNO-975956">
    <property type="pathway name" value="Nonsense Mediated Decay (NMD) independent of the Exon Junction Complex (EJC)"/>
</dbReference>
<dbReference type="Reactome" id="R-RNO-975957">
    <property type="pathway name" value="Nonsense Mediated Decay (NMD) enhanced by the Exon Junction Complex (EJC)"/>
</dbReference>
<dbReference type="PRO" id="PR:P19944"/>
<dbReference type="Proteomes" id="UP000002494">
    <property type="component" value="Chromosome 17"/>
</dbReference>
<dbReference type="Proteomes" id="UP000002494">
    <property type="component" value="Chromosome 8"/>
</dbReference>
<dbReference type="Bgee" id="ENSRNOG00000013874">
    <property type="expression patterns" value="Expressed in thymus and 19 other cell types or tissues"/>
</dbReference>
<dbReference type="GO" id="GO:0005737">
    <property type="term" value="C:cytoplasm"/>
    <property type="evidence" value="ECO:0000266"/>
    <property type="project" value="RGD"/>
</dbReference>
<dbReference type="GO" id="GO:0022625">
    <property type="term" value="C:cytosolic large ribosomal subunit"/>
    <property type="evidence" value="ECO:0000314"/>
    <property type="project" value="RGD"/>
</dbReference>
<dbReference type="GO" id="GO:0022626">
    <property type="term" value="C:cytosolic ribosome"/>
    <property type="evidence" value="ECO:0000266"/>
    <property type="project" value="RGD"/>
</dbReference>
<dbReference type="GO" id="GO:0045202">
    <property type="term" value="C:synapse"/>
    <property type="evidence" value="ECO:0000266"/>
    <property type="project" value="RGD"/>
</dbReference>
<dbReference type="GO" id="GO:0035800">
    <property type="term" value="F:deubiquitinase activator activity"/>
    <property type="evidence" value="ECO:0007669"/>
    <property type="project" value="Ensembl"/>
</dbReference>
<dbReference type="GO" id="GO:0030295">
    <property type="term" value="F:protein kinase activator activity"/>
    <property type="evidence" value="ECO:0000318"/>
    <property type="project" value="GO_Central"/>
</dbReference>
<dbReference type="GO" id="GO:0043021">
    <property type="term" value="F:ribonucleoprotein complex binding"/>
    <property type="evidence" value="ECO:0000353"/>
    <property type="project" value="RGD"/>
</dbReference>
<dbReference type="GO" id="GO:0003735">
    <property type="term" value="F:structural constituent of ribosome"/>
    <property type="evidence" value="ECO:0000266"/>
    <property type="project" value="RGD"/>
</dbReference>
<dbReference type="GO" id="GO:0031223">
    <property type="term" value="P:auditory behavior"/>
    <property type="evidence" value="ECO:0007669"/>
    <property type="project" value="Ensembl"/>
</dbReference>
<dbReference type="GO" id="GO:0071320">
    <property type="term" value="P:cellular response to cAMP"/>
    <property type="evidence" value="ECO:0000270"/>
    <property type="project" value="RGD"/>
</dbReference>
<dbReference type="GO" id="GO:1904401">
    <property type="term" value="P:cellular response to Thyroid stimulating hormone"/>
    <property type="evidence" value="ECO:0000270"/>
    <property type="project" value="RGD"/>
</dbReference>
<dbReference type="GO" id="GO:0090103">
    <property type="term" value="P:cochlea morphogenesis"/>
    <property type="evidence" value="ECO:0007669"/>
    <property type="project" value="Ensembl"/>
</dbReference>
<dbReference type="GO" id="GO:0097094">
    <property type="term" value="P:craniofacial suture morphogenesis"/>
    <property type="evidence" value="ECO:0007669"/>
    <property type="project" value="Ensembl"/>
</dbReference>
<dbReference type="GO" id="GO:0002181">
    <property type="term" value="P:cytoplasmic translation"/>
    <property type="evidence" value="ECO:0000318"/>
    <property type="project" value="GO_Central"/>
</dbReference>
<dbReference type="GO" id="GO:0035112">
    <property type="term" value="P:genitalia morphogenesis"/>
    <property type="evidence" value="ECO:0007669"/>
    <property type="project" value="Ensembl"/>
</dbReference>
<dbReference type="GO" id="GO:1905748">
    <property type="term" value="P:hard palate morphogenesis"/>
    <property type="evidence" value="ECO:0007669"/>
    <property type="project" value="Ensembl"/>
</dbReference>
<dbReference type="GO" id="GO:0002244">
    <property type="term" value="P:hematopoietic progenitor cell differentiation"/>
    <property type="evidence" value="ECO:0007669"/>
    <property type="project" value="Ensembl"/>
</dbReference>
<dbReference type="GO" id="GO:0098583">
    <property type="term" value="P:learned vocalization behavior"/>
    <property type="evidence" value="ECO:0007669"/>
    <property type="project" value="Ensembl"/>
</dbReference>
<dbReference type="GO" id="GO:0031663">
    <property type="term" value="P:lipopolysaccharide-mediated signaling pathway"/>
    <property type="evidence" value="ECO:0007669"/>
    <property type="project" value="Ensembl"/>
</dbReference>
<dbReference type="GO" id="GO:0071626">
    <property type="term" value="P:mastication"/>
    <property type="evidence" value="ECO:0007669"/>
    <property type="project" value="Ensembl"/>
</dbReference>
<dbReference type="GO" id="GO:0030099">
    <property type="term" value="P:myeloid cell differentiation"/>
    <property type="evidence" value="ECO:0007669"/>
    <property type="project" value="Ensembl"/>
</dbReference>
<dbReference type="GO" id="GO:1901078">
    <property type="term" value="P:negative regulation of relaxation of muscle"/>
    <property type="evidence" value="ECO:0007669"/>
    <property type="project" value="Ensembl"/>
</dbReference>
<dbReference type="GO" id="GO:1905747">
    <property type="term" value="P:negative regulation of saliva secretion"/>
    <property type="evidence" value="ECO:0007669"/>
    <property type="project" value="Ensembl"/>
</dbReference>
<dbReference type="GO" id="GO:0050885">
    <property type="term" value="P:neuromuscular process controlling balance"/>
    <property type="evidence" value="ECO:0007669"/>
    <property type="project" value="Ensembl"/>
</dbReference>
<dbReference type="GO" id="GO:0030432">
    <property type="term" value="P:peristalsis"/>
    <property type="evidence" value="ECO:0007669"/>
    <property type="project" value="Ensembl"/>
</dbReference>
<dbReference type="GO" id="GO:0045727">
    <property type="term" value="P:positive regulation of translation"/>
    <property type="evidence" value="ECO:0000314"/>
    <property type="project" value="RGD"/>
</dbReference>
<dbReference type="GO" id="GO:1902238">
    <property type="term" value="P:regulation of intrinsic apoptotic signaling pathway in response to osmotic stress by p53 class mediator"/>
    <property type="evidence" value="ECO:0007669"/>
    <property type="project" value="Ensembl"/>
</dbReference>
<dbReference type="GO" id="GO:0048634">
    <property type="term" value="P:regulation of muscle organ development"/>
    <property type="evidence" value="ECO:0007669"/>
    <property type="project" value="Ensembl"/>
</dbReference>
<dbReference type="GO" id="GO:0006417">
    <property type="term" value="P:regulation of translation"/>
    <property type="evidence" value="ECO:0000266"/>
    <property type="project" value="RGD"/>
</dbReference>
<dbReference type="GO" id="GO:0007356">
    <property type="term" value="P:thorax and anterior abdomen determination"/>
    <property type="evidence" value="ECO:0007669"/>
    <property type="project" value="Ensembl"/>
</dbReference>
<dbReference type="GO" id="GO:0002224">
    <property type="term" value="P:toll-like receptor signaling pathway"/>
    <property type="evidence" value="ECO:0007669"/>
    <property type="project" value="Ensembl"/>
</dbReference>
<dbReference type="GO" id="GO:0006414">
    <property type="term" value="P:translational elongation"/>
    <property type="evidence" value="ECO:0007669"/>
    <property type="project" value="InterPro"/>
</dbReference>
<dbReference type="GO" id="GO:0021559">
    <property type="term" value="P:trigeminal nerve development"/>
    <property type="evidence" value="ECO:0007669"/>
    <property type="project" value="Ensembl"/>
</dbReference>
<dbReference type="GO" id="GO:0021650">
    <property type="term" value="P:vestibulocochlear nerve formation"/>
    <property type="evidence" value="ECO:0007669"/>
    <property type="project" value="Ensembl"/>
</dbReference>
<dbReference type="CDD" id="cd05831">
    <property type="entry name" value="Ribosomal_P1"/>
    <property type="match status" value="1"/>
</dbReference>
<dbReference type="FunFam" id="1.10.10.1410:FF:000001">
    <property type="entry name" value="60S acidic ribosomal protein P1"/>
    <property type="match status" value="1"/>
</dbReference>
<dbReference type="Gene3D" id="1.10.10.1410">
    <property type="match status" value="1"/>
</dbReference>
<dbReference type="HAMAP" id="MF_01478">
    <property type="entry name" value="Ribosomal_L12_arch"/>
    <property type="match status" value="1"/>
</dbReference>
<dbReference type="InterPro" id="IPR038716">
    <property type="entry name" value="P1/P2_N_sf"/>
</dbReference>
<dbReference type="InterPro" id="IPR027534">
    <property type="entry name" value="Ribosomal_P1/P2"/>
</dbReference>
<dbReference type="PANTHER" id="PTHR45696">
    <property type="entry name" value="60S ACIDIC RIBOSOMAL PROTEIN P1"/>
    <property type="match status" value="1"/>
</dbReference>
<dbReference type="PANTHER" id="PTHR45696:SF32">
    <property type="entry name" value="LARGE RIBOSOMAL SUBUNIT PROTEIN P1"/>
    <property type="match status" value="1"/>
</dbReference>
<dbReference type="Pfam" id="PF00428">
    <property type="entry name" value="Ribosomal_60s"/>
    <property type="match status" value="1"/>
</dbReference>
<gene>
    <name type="primary">Rplp1</name>
</gene>
<protein>
    <recommendedName>
        <fullName evidence="4">Large ribosomal subunit protein P1</fullName>
    </recommendedName>
    <alternativeName>
        <fullName>60S acidic ribosomal protein P1</fullName>
    </alternativeName>
</protein>
<organism>
    <name type="scientific">Rattus norvegicus</name>
    <name type="common">Rat</name>
    <dbReference type="NCBI Taxonomy" id="10116"/>
    <lineage>
        <taxon>Eukaryota</taxon>
        <taxon>Metazoa</taxon>
        <taxon>Chordata</taxon>
        <taxon>Craniata</taxon>
        <taxon>Vertebrata</taxon>
        <taxon>Euteleostomi</taxon>
        <taxon>Mammalia</taxon>
        <taxon>Eutheria</taxon>
        <taxon>Euarchontoglires</taxon>
        <taxon>Glires</taxon>
        <taxon>Rodentia</taxon>
        <taxon>Myomorpha</taxon>
        <taxon>Muroidea</taxon>
        <taxon>Muridae</taxon>
        <taxon>Murinae</taxon>
        <taxon>Rattus</taxon>
    </lineage>
</organism>
<reference key="1">
    <citation type="journal article" date="1991" name="Biochimie">
        <title>The primary structure of rat ribosomal proteins P0, P1, and P2 and a proposal for a uniform nomenclature for mammalian and yeast ribosomal proteins.</title>
        <authorList>
            <person name="Wool I.G."/>
            <person name="Chan Y.-L."/>
            <person name="Glueck A."/>
            <person name="Suzuki K."/>
        </authorList>
    </citation>
    <scope>NUCLEOTIDE SEQUENCE [MRNA]</scope>
    <source>
        <strain>Sprague-Dawley</strain>
        <tissue>Liver</tissue>
    </source>
</reference>
<reference key="2">
    <citation type="journal article" date="2004" name="Genome Res.">
        <title>The status, quality, and expansion of the NIH full-length cDNA project: the Mammalian Gene Collection (MGC).</title>
        <authorList>
            <consortium name="The MGC Project Team"/>
        </authorList>
    </citation>
    <scope>NUCLEOTIDE SEQUENCE [LARGE SCALE MRNA]</scope>
    <source>
        <tissue>Pituitary</tissue>
    </source>
</reference>
<comment type="function">
    <text>Plays an important role in the elongation step of protein synthesis.</text>
</comment>
<comment type="subunit">
    <text evidence="1">Heterodimer with RPLP2 at the lateral ribosomal stalk of the large ribosomal subunit.</text>
</comment>
<comment type="PTM">
    <text evidence="2">Ubiquitinated at Lys-92 and Lys-93 by RNF14 and RNF25 in response to ribosome collisions (ribosome stalling).</text>
</comment>
<comment type="similarity">
    <text evidence="4">Belongs to the eukaryotic ribosomal protein P1/P2 family.</text>
</comment>
<evidence type="ECO:0000250" key="1"/>
<evidence type="ECO:0000250" key="2">
    <source>
        <dbReference type="UniProtKB" id="P05386"/>
    </source>
</evidence>
<evidence type="ECO:0000256" key="3">
    <source>
        <dbReference type="SAM" id="MobiDB-lite"/>
    </source>
</evidence>
<evidence type="ECO:0000305" key="4"/>
<proteinExistence type="inferred from homology"/>
<keyword id="KW-0007">Acetylation</keyword>
<keyword id="KW-1017">Isopeptide bond</keyword>
<keyword id="KW-0597">Phosphoprotein</keyword>
<keyword id="KW-1185">Reference proteome</keyword>
<keyword id="KW-0687">Ribonucleoprotein</keyword>
<keyword id="KW-0689">Ribosomal protein</keyword>
<keyword id="KW-0832">Ubl conjugation</keyword>
<sequence>MASVSELACIYSALILHDDEVTVTEDKINALIKAAGVNVEPFWPGLFAKALANVNIGSLICNVGAGGPAPAAGAAPAGGPAPSAAAAPAEEKKVEAKKEESEESEDDMGFGLFD</sequence>
<name>RLA1_RAT</name>
<accession>P19944</accession>
<feature type="initiator methionine" description="Removed" evidence="2">
    <location>
        <position position="1"/>
    </location>
</feature>
<feature type="chain" id="PRO_0000157688" description="Large ribosomal subunit protein P1">
    <location>
        <begin position="2"/>
        <end position="114"/>
    </location>
</feature>
<feature type="region of interest" description="Disordered" evidence="3">
    <location>
        <begin position="69"/>
        <end position="114"/>
    </location>
</feature>
<feature type="compositionally biased region" description="Low complexity" evidence="3">
    <location>
        <begin position="69"/>
        <end position="88"/>
    </location>
</feature>
<feature type="compositionally biased region" description="Basic and acidic residues" evidence="3">
    <location>
        <begin position="89"/>
        <end position="100"/>
    </location>
</feature>
<feature type="modified residue" description="N-acetylalanine" evidence="2">
    <location>
        <position position="2"/>
    </location>
</feature>
<feature type="modified residue" description="Phosphoserine" evidence="2">
    <location>
        <position position="101"/>
    </location>
</feature>
<feature type="cross-link" description="Glycyl lysine isopeptide (Lys-Gly) (interchain with G-Cter in ubiquitin)" evidence="2">
    <location>
        <position position="92"/>
    </location>
</feature>
<feature type="cross-link" description="Glycyl lysine isopeptide (Lys-Gly) (interchain with G-Cter in ubiquitin)" evidence="2">
    <location>
        <position position="93"/>
    </location>
</feature>